<accession>B2UPP6</accession>
<name>SYS_AKKM8</name>
<evidence type="ECO:0000255" key="1">
    <source>
        <dbReference type="HAMAP-Rule" id="MF_00176"/>
    </source>
</evidence>
<evidence type="ECO:0000256" key="2">
    <source>
        <dbReference type="SAM" id="MobiDB-lite"/>
    </source>
</evidence>
<proteinExistence type="inferred from homology"/>
<reference key="1">
    <citation type="journal article" date="2011" name="PLoS ONE">
        <title>The genome of Akkermansia muciniphila, a dedicated intestinal mucin degrader, and its use in exploring intestinal metagenomes.</title>
        <authorList>
            <person name="van Passel M.W."/>
            <person name="Kant R."/>
            <person name="Zoetendal E.G."/>
            <person name="Plugge C.M."/>
            <person name="Derrien M."/>
            <person name="Malfatti S.A."/>
            <person name="Chain P.S."/>
            <person name="Woyke T."/>
            <person name="Palva A."/>
            <person name="de Vos W.M."/>
            <person name="Smidt H."/>
        </authorList>
    </citation>
    <scope>NUCLEOTIDE SEQUENCE [LARGE SCALE GENOMIC DNA]</scope>
    <source>
        <strain>ATCC BAA-835 / DSM 22959 / JCM 33894 / BCRC 81048 / CCUG 64013 / CIP 107961 / Muc</strain>
    </source>
</reference>
<keyword id="KW-0030">Aminoacyl-tRNA synthetase</keyword>
<keyword id="KW-0067">ATP-binding</keyword>
<keyword id="KW-0963">Cytoplasm</keyword>
<keyword id="KW-0436">Ligase</keyword>
<keyword id="KW-0547">Nucleotide-binding</keyword>
<keyword id="KW-0648">Protein biosynthesis</keyword>
<keyword id="KW-1185">Reference proteome</keyword>
<sequence>MLDIRVIRENPEEVKARLKPRSGDAWKLVDDVLACDEARRNAETEKQALQSERNATSKQIGMLKKKGEDTSSIEARVREIGDRIRELDRVAEENAAQLTSLLMNIPNLPHLECPVGADETANPEIKLWGEKPAIENPKDHVELAANLGMISFEDGARITGSGFVVYRGAGARLERALINFLLNTQTVENGYQEVGVPFVVKRECMEGTGQLPKFEEDMYGTEDQQMFLIPTAEVPVTNLYRDTILQESDLPIKMAAYTPCFRREAGSAGRINRGMIRVHQFDKVELVQILKPEDSFRELEVLRSHAESILQKLGLHYRVIELCTGDLGFSSAKTYDIEVWAPGQGQYLEVSSCSCFTDYQARRMRLRYKDADGKNQFCHTLNGSGTALPRLYVALLETYQQPDGSIRIPEALVPYFGADCIRPEQA</sequence>
<gene>
    <name evidence="1" type="primary">serS</name>
    <name type="ordered locus">Amuc_2115</name>
</gene>
<protein>
    <recommendedName>
        <fullName evidence="1">Serine--tRNA ligase</fullName>
        <ecNumber evidence="1">6.1.1.11</ecNumber>
    </recommendedName>
    <alternativeName>
        <fullName evidence="1">Seryl-tRNA synthetase</fullName>
        <shortName evidence="1">SerRS</shortName>
    </alternativeName>
    <alternativeName>
        <fullName evidence="1">Seryl-tRNA(Ser/Sec) synthetase</fullName>
    </alternativeName>
</protein>
<comment type="function">
    <text evidence="1">Catalyzes the attachment of serine to tRNA(Ser). Is also able to aminoacylate tRNA(Sec) with serine, to form the misacylated tRNA L-seryl-tRNA(Sec), which will be further converted into selenocysteinyl-tRNA(Sec).</text>
</comment>
<comment type="catalytic activity">
    <reaction evidence="1">
        <text>tRNA(Ser) + L-serine + ATP = L-seryl-tRNA(Ser) + AMP + diphosphate + H(+)</text>
        <dbReference type="Rhea" id="RHEA:12292"/>
        <dbReference type="Rhea" id="RHEA-COMP:9669"/>
        <dbReference type="Rhea" id="RHEA-COMP:9703"/>
        <dbReference type="ChEBI" id="CHEBI:15378"/>
        <dbReference type="ChEBI" id="CHEBI:30616"/>
        <dbReference type="ChEBI" id="CHEBI:33019"/>
        <dbReference type="ChEBI" id="CHEBI:33384"/>
        <dbReference type="ChEBI" id="CHEBI:78442"/>
        <dbReference type="ChEBI" id="CHEBI:78533"/>
        <dbReference type="ChEBI" id="CHEBI:456215"/>
        <dbReference type="EC" id="6.1.1.11"/>
    </reaction>
</comment>
<comment type="catalytic activity">
    <reaction evidence="1">
        <text>tRNA(Sec) + L-serine + ATP = L-seryl-tRNA(Sec) + AMP + diphosphate + H(+)</text>
        <dbReference type="Rhea" id="RHEA:42580"/>
        <dbReference type="Rhea" id="RHEA-COMP:9742"/>
        <dbReference type="Rhea" id="RHEA-COMP:10128"/>
        <dbReference type="ChEBI" id="CHEBI:15378"/>
        <dbReference type="ChEBI" id="CHEBI:30616"/>
        <dbReference type="ChEBI" id="CHEBI:33019"/>
        <dbReference type="ChEBI" id="CHEBI:33384"/>
        <dbReference type="ChEBI" id="CHEBI:78442"/>
        <dbReference type="ChEBI" id="CHEBI:78533"/>
        <dbReference type="ChEBI" id="CHEBI:456215"/>
        <dbReference type="EC" id="6.1.1.11"/>
    </reaction>
</comment>
<comment type="pathway">
    <text evidence="1">Aminoacyl-tRNA biosynthesis; selenocysteinyl-tRNA(Sec) biosynthesis; L-seryl-tRNA(Sec) from L-serine and tRNA(Sec): step 1/1.</text>
</comment>
<comment type="subunit">
    <text evidence="1">Homodimer. The tRNA molecule binds across the dimer.</text>
</comment>
<comment type="subcellular location">
    <subcellularLocation>
        <location evidence="1">Cytoplasm</location>
    </subcellularLocation>
</comment>
<comment type="domain">
    <text evidence="1">Consists of two distinct domains, a catalytic core and a N-terminal extension that is involved in tRNA binding.</text>
</comment>
<comment type="similarity">
    <text evidence="1">Belongs to the class-II aminoacyl-tRNA synthetase family. Type-1 seryl-tRNA synthetase subfamily.</text>
</comment>
<dbReference type="EC" id="6.1.1.11" evidence="1"/>
<dbReference type="EMBL" id="CP001071">
    <property type="protein sequence ID" value="ACD05924.1"/>
    <property type="molecule type" value="Genomic_DNA"/>
</dbReference>
<dbReference type="RefSeq" id="WP_012421138.1">
    <property type="nucleotide sequence ID" value="NZ_CP071807.1"/>
</dbReference>
<dbReference type="SMR" id="B2UPP6"/>
<dbReference type="STRING" id="349741.Amuc_2115"/>
<dbReference type="PaxDb" id="349741-Amuc_2115"/>
<dbReference type="GeneID" id="60881697"/>
<dbReference type="KEGG" id="amu:Amuc_2115"/>
<dbReference type="eggNOG" id="COG0172">
    <property type="taxonomic scope" value="Bacteria"/>
</dbReference>
<dbReference type="HOGENOM" id="CLU_023797_1_1_0"/>
<dbReference type="OrthoDB" id="9804647at2"/>
<dbReference type="BioCyc" id="AMUC349741:G1GBX-2257-MONOMER"/>
<dbReference type="UniPathway" id="UPA00906">
    <property type="reaction ID" value="UER00895"/>
</dbReference>
<dbReference type="Proteomes" id="UP000001031">
    <property type="component" value="Chromosome"/>
</dbReference>
<dbReference type="GO" id="GO:0005737">
    <property type="term" value="C:cytoplasm"/>
    <property type="evidence" value="ECO:0007669"/>
    <property type="project" value="UniProtKB-SubCell"/>
</dbReference>
<dbReference type="GO" id="GO:0005524">
    <property type="term" value="F:ATP binding"/>
    <property type="evidence" value="ECO:0007669"/>
    <property type="project" value="UniProtKB-UniRule"/>
</dbReference>
<dbReference type="GO" id="GO:0004828">
    <property type="term" value="F:serine-tRNA ligase activity"/>
    <property type="evidence" value="ECO:0007669"/>
    <property type="project" value="UniProtKB-UniRule"/>
</dbReference>
<dbReference type="GO" id="GO:0016260">
    <property type="term" value="P:selenocysteine biosynthetic process"/>
    <property type="evidence" value="ECO:0007669"/>
    <property type="project" value="UniProtKB-UniRule"/>
</dbReference>
<dbReference type="GO" id="GO:0006434">
    <property type="term" value="P:seryl-tRNA aminoacylation"/>
    <property type="evidence" value="ECO:0007669"/>
    <property type="project" value="UniProtKB-UniRule"/>
</dbReference>
<dbReference type="CDD" id="cd00770">
    <property type="entry name" value="SerRS_core"/>
    <property type="match status" value="1"/>
</dbReference>
<dbReference type="Gene3D" id="3.30.930.10">
    <property type="entry name" value="Bira Bifunctional Protein, Domain 2"/>
    <property type="match status" value="1"/>
</dbReference>
<dbReference type="Gene3D" id="1.10.287.40">
    <property type="entry name" value="Serine-tRNA synthetase, tRNA binding domain"/>
    <property type="match status" value="1"/>
</dbReference>
<dbReference type="HAMAP" id="MF_00176">
    <property type="entry name" value="Ser_tRNA_synth_type1"/>
    <property type="match status" value="1"/>
</dbReference>
<dbReference type="InterPro" id="IPR002314">
    <property type="entry name" value="aa-tRNA-synt_IIb"/>
</dbReference>
<dbReference type="InterPro" id="IPR006195">
    <property type="entry name" value="aa-tRNA-synth_II"/>
</dbReference>
<dbReference type="InterPro" id="IPR045864">
    <property type="entry name" value="aa-tRNA-synth_II/BPL/LPL"/>
</dbReference>
<dbReference type="InterPro" id="IPR002317">
    <property type="entry name" value="Ser-tRNA-ligase_type_1"/>
</dbReference>
<dbReference type="InterPro" id="IPR015866">
    <property type="entry name" value="Ser-tRNA-synth_1_N"/>
</dbReference>
<dbReference type="InterPro" id="IPR042103">
    <property type="entry name" value="SerRS_1_N_sf"/>
</dbReference>
<dbReference type="InterPro" id="IPR033729">
    <property type="entry name" value="SerRS_core"/>
</dbReference>
<dbReference type="InterPro" id="IPR010978">
    <property type="entry name" value="tRNA-bd_arm"/>
</dbReference>
<dbReference type="NCBIfam" id="TIGR00414">
    <property type="entry name" value="serS"/>
    <property type="match status" value="1"/>
</dbReference>
<dbReference type="PANTHER" id="PTHR43697:SF1">
    <property type="entry name" value="SERINE--TRNA LIGASE"/>
    <property type="match status" value="1"/>
</dbReference>
<dbReference type="PANTHER" id="PTHR43697">
    <property type="entry name" value="SERYL-TRNA SYNTHETASE"/>
    <property type="match status" value="1"/>
</dbReference>
<dbReference type="Pfam" id="PF02403">
    <property type="entry name" value="Seryl_tRNA_N"/>
    <property type="match status" value="1"/>
</dbReference>
<dbReference type="Pfam" id="PF00587">
    <property type="entry name" value="tRNA-synt_2b"/>
    <property type="match status" value="1"/>
</dbReference>
<dbReference type="PIRSF" id="PIRSF001529">
    <property type="entry name" value="Ser-tRNA-synth_IIa"/>
    <property type="match status" value="1"/>
</dbReference>
<dbReference type="PRINTS" id="PR00981">
    <property type="entry name" value="TRNASYNTHSER"/>
</dbReference>
<dbReference type="SUPFAM" id="SSF55681">
    <property type="entry name" value="Class II aaRS and biotin synthetases"/>
    <property type="match status" value="1"/>
</dbReference>
<dbReference type="SUPFAM" id="SSF46589">
    <property type="entry name" value="tRNA-binding arm"/>
    <property type="match status" value="1"/>
</dbReference>
<dbReference type="PROSITE" id="PS50862">
    <property type="entry name" value="AA_TRNA_LIGASE_II"/>
    <property type="match status" value="1"/>
</dbReference>
<organism>
    <name type="scientific">Akkermansia muciniphila (strain ATCC BAA-835 / DSM 22959 / JCM 33894 / BCRC 81048 / CCUG 64013 / CIP 107961 / Muc)</name>
    <dbReference type="NCBI Taxonomy" id="349741"/>
    <lineage>
        <taxon>Bacteria</taxon>
        <taxon>Pseudomonadati</taxon>
        <taxon>Verrucomicrobiota</taxon>
        <taxon>Verrucomicrobiia</taxon>
        <taxon>Verrucomicrobiales</taxon>
        <taxon>Akkermansiaceae</taxon>
        <taxon>Akkermansia</taxon>
    </lineage>
</organism>
<feature type="chain" id="PRO_1000098028" description="Serine--tRNA ligase">
    <location>
        <begin position="1"/>
        <end position="426"/>
    </location>
</feature>
<feature type="region of interest" description="Disordered" evidence="2">
    <location>
        <begin position="44"/>
        <end position="67"/>
    </location>
</feature>
<feature type="compositionally biased region" description="Polar residues" evidence="2">
    <location>
        <begin position="47"/>
        <end position="59"/>
    </location>
</feature>
<feature type="binding site" evidence="1">
    <location>
        <begin position="231"/>
        <end position="233"/>
    </location>
    <ligand>
        <name>L-serine</name>
        <dbReference type="ChEBI" id="CHEBI:33384"/>
    </ligand>
</feature>
<feature type="binding site" evidence="1">
    <location>
        <begin position="262"/>
        <end position="264"/>
    </location>
    <ligand>
        <name>ATP</name>
        <dbReference type="ChEBI" id="CHEBI:30616"/>
    </ligand>
</feature>
<feature type="binding site" evidence="1">
    <location>
        <position position="278"/>
    </location>
    <ligand>
        <name>ATP</name>
        <dbReference type="ChEBI" id="CHEBI:30616"/>
    </ligand>
</feature>
<feature type="binding site" evidence="1">
    <location>
        <position position="285"/>
    </location>
    <ligand>
        <name>L-serine</name>
        <dbReference type="ChEBI" id="CHEBI:33384"/>
    </ligand>
</feature>
<feature type="binding site" evidence="1">
    <location>
        <begin position="349"/>
        <end position="352"/>
    </location>
    <ligand>
        <name>ATP</name>
        <dbReference type="ChEBI" id="CHEBI:30616"/>
    </ligand>
</feature>
<feature type="binding site" evidence="1">
    <location>
        <position position="384"/>
    </location>
    <ligand>
        <name>L-serine</name>
        <dbReference type="ChEBI" id="CHEBI:33384"/>
    </ligand>
</feature>